<organism>
    <name type="scientific">Clostridium acetobutylicum (strain ATCC 824 / DSM 792 / JCM 1419 / IAM 19013 / LMG 5710 / NBRC 13948 / NRRL B-527 / VKM B-1787 / 2291 / W)</name>
    <dbReference type="NCBI Taxonomy" id="272562"/>
    <lineage>
        <taxon>Bacteria</taxon>
        <taxon>Bacillati</taxon>
        <taxon>Bacillota</taxon>
        <taxon>Clostridia</taxon>
        <taxon>Eubacteriales</taxon>
        <taxon>Clostridiaceae</taxon>
        <taxon>Clostridium</taxon>
    </lineage>
</organism>
<evidence type="ECO:0000305" key="1"/>
<protein>
    <recommendedName>
        <fullName>Uncharacterized protein CA_C3712</fullName>
    </recommendedName>
</protein>
<accession>Q04352</accession>
<proteinExistence type="predicted"/>
<keyword id="KW-1185">Reference proteome</keyword>
<reference key="1">
    <citation type="journal article" date="1993" name="J. Bacteriol.">
        <title>Sequence and molecular characterization of a DNA region encoding a small heat shock protein of Clostridium acetobutylicum.</title>
        <authorList>
            <person name="Sauer U."/>
            <person name="Duerre P."/>
        </authorList>
    </citation>
    <scope>NUCLEOTIDE SEQUENCE [GENOMIC DNA]</scope>
    <source>
        <strain>ATCC 824 / DSM 792 / JCM 1419 / IAM 19013 / LMG 5710 / NBRC 13948 / NRRL B-527 / VKM B-1787 / 2291 / W</strain>
    </source>
</reference>
<reference key="2">
    <citation type="journal article" date="2001" name="J. Bacteriol.">
        <title>Genome sequence and comparative analysis of the solvent-producing bacterium Clostridium acetobutylicum.</title>
        <authorList>
            <person name="Noelling J."/>
            <person name="Breton G."/>
            <person name="Omelchenko M.V."/>
            <person name="Makarova K.S."/>
            <person name="Zeng Q."/>
            <person name="Gibson R."/>
            <person name="Lee H.M."/>
            <person name="Dubois J."/>
            <person name="Qiu D."/>
            <person name="Hitti J."/>
            <person name="Wolf Y.I."/>
            <person name="Tatusov R.L."/>
            <person name="Sabathe F."/>
            <person name="Doucette-Stamm L.A."/>
            <person name="Soucaille P."/>
            <person name="Daly M.J."/>
            <person name="Bennett G.N."/>
            <person name="Koonin E.V."/>
            <person name="Smith D.R."/>
        </authorList>
    </citation>
    <scope>NUCLEOTIDE SEQUENCE [LARGE SCALE GENOMIC DNA]</scope>
    <source>
        <strain>ATCC 824 / DSM 792 / JCM 1419 / IAM 19013 / LMG 5710 / NBRC 13948 / NRRL B-527 / VKM B-1787 / 2291 / W</strain>
    </source>
</reference>
<name>Y3712_CLOAB</name>
<dbReference type="EMBL" id="X65276">
    <property type="protein sequence ID" value="CAA46376.1"/>
    <property type="status" value="ALT_INIT"/>
    <property type="molecule type" value="Genomic_DNA"/>
</dbReference>
<dbReference type="EMBL" id="AE001437">
    <property type="protein sequence ID" value="AAK81632.1"/>
    <property type="molecule type" value="Genomic_DNA"/>
</dbReference>
<dbReference type="PIR" id="E97355">
    <property type="entry name" value="E97355"/>
</dbReference>
<dbReference type="RefSeq" id="NP_350292.1">
    <property type="nucleotide sequence ID" value="NC_003030.1"/>
</dbReference>
<dbReference type="STRING" id="272562.CA_C3712"/>
<dbReference type="KEGG" id="cac:CA_C3712"/>
<dbReference type="PATRIC" id="fig|272562.8.peg.3901"/>
<dbReference type="eggNOG" id="ENOG5033N3P">
    <property type="taxonomic scope" value="Bacteria"/>
</dbReference>
<dbReference type="HOGENOM" id="CLU_1632455_0_0_9"/>
<dbReference type="OrthoDB" id="2243912at2"/>
<dbReference type="Proteomes" id="UP000000814">
    <property type="component" value="Chromosome"/>
</dbReference>
<dbReference type="InterPro" id="IPR018920">
    <property type="entry name" value="EssA/YueC"/>
</dbReference>
<dbReference type="NCBIfam" id="TIGR03927">
    <property type="entry name" value="T7SS_EssA_Firm"/>
    <property type="match status" value="1"/>
</dbReference>
<feature type="chain" id="PRO_0000207116" description="Uncharacterized protein CA_C3712">
    <location>
        <begin position="1"/>
        <end position="180"/>
    </location>
</feature>
<gene>
    <name type="ordered locus">CA_C3712</name>
</gene>
<comment type="sequence caution" evidence="1">
    <conflict type="erroneous initiation">
        <sequence resource="EMBL-CDS" id="CAA46376"/>
    </conflict>
</comment>
<sequence length="180" mass="20263">MLKASVSNKARCYFWWHLLLKSGLLLFICMVLGIVFLASPKCFAVDNGSLQLNPNVITNSDGGVGTTSDFSIRSQLFTPTIDKLAKEQAHDNVPKQRETLDFSKQAINTLYNANTKKVVEQLFVNYKPQVIASSTSTSDSKTMIWYWVILLAAVPLIVLAIFLGQKNAQRRLRKKNERTH</sequence>